<organism>
    <name type="scientific">Eremothecium gossypii (strain ATCC 10895 / CBS 109.51 / FGSC 9923 / NRRL Y-1056)</name>
    <name type="common">Yeast</name>
    <name type="synonym">Ashbya gossypii</name>
    <dbReference type="NCBI Taxonomy" id="284811"/>
    <lineage>
        <taxon>Eukaryota</taxon>
        <taxon>Fungi</taxon>
        <taxon>Dikarya</taxon>
        <taxon>Ascomycota</taxon>
        <taxon>Saccharomycotina</taxon>
        <taxon>Saccharomycetes</taxon>
        <taxon>Saccharomycetales</taxon>
        <taxon>Saccharomycetaceae</taxon>
        <taxon>Eremothecium</taxon>
    </lineage>
</organism>
<protein>
    <recommendedName>
        <fullName>Biogenesis of lysosome-related organelles complex 1 subunit KXD1</fullName>
        <shortName>BLOC-1 subunit KXD1</shortName>
    </recommendedName>
    <alternativeName>
        <fullName>KxDL homolog</fullName>
    </alternativeName>
</protein>
<evidence type="ECO:0000250" key="1"/>
<evidence type="ECO:0000256" key="2">
    <source>
        <dbReference type="SAM" id="MobiDB-lite"/>
    </source>
</evidence>
<evidence type="ECO:0000305" key="3"/>
<comment type="function">
    <text evidence="1">Component of the biogenesis of lysosome-related organelles complex-1 (BLOC-1) involved in endosomal cargo sorting.</text>
</comment>
<comment type="subunit">
    <text evidence="1">Component of the biogenesis of lysosome-related organelles complex-1 (BLOC-1).</text>
</comment>
<comment type="subcellular location">
    <subcellularLocation>
        <location evidence="1">Endosome</location>
    </subcellularLocation>
</comment>
<comment type="similarity">
    <text evidence="3">Belongs to the KXD1 family.</text>
</comment>
<feature type="chain" id="PRO_0000410666" description="Biogenesis of lysosome-related organelles complex 1 subunit KXD1">
    <location>
        <begin position="1"/>
        <end position="190"/>
    </location>
</feature>
<feature type="region of interest" description="Disordered" evidence="2">
    <location>
        <begin position="1"/>
        <end position="56"/>
    </location>
</feature>
<feature type="compositionally biased region" description="Low complexity" evidence="2">
    <location>
        <begin position="36"/>
        <end position="56"/>
    </location>
</feature>
<name>KXD1_EREGS</name>
<accession>Q755A2</accession>
<keyword id="KW-0967">Endosome</keyword>
<keyword id="KW-1185">Reference proteome</keyword>
<keyword id="KW-0813">Transport</keyword>
<gene>
    <name type="primary">KXD1</name>
    <name type="ordered locus">AFL077C</name>
</gene>
<sequence length="190" mass="21013">MSDDVDSETRSRTPSISSRQFIIPEDELATLDSENSSLDSGGEEASSGGSDAYSAAGGSTPVFSRLGQHPSTFFTGSQVAPIFDTSLYLFESLTQSLDSVDFSEALSLQTKTSATINSKSRELQLLVGEVQTHLRRLQTAFEQGQHTAQRVRHNLRDITRGVESLKQTFARSYPIEYHQALERAYERRAE</sequence>
<reference key="1">
    <citation type="journal article" date="2004" name="Science">
        <title>The Ashbya gossypii genome as a tool for mapping the ancient Saccharomyces cerevisiae genome.</title>
        <authorList>
            <person name="Dietrich F.S."/>
            <person name="Voegeli S."/>
            <person name="Brachat S."/>
            <person name="Lerch A."/>
            <person name="Gates K."/>
            <person name="Steiner S."/>
            <person name="Mohr C."/>
            <person name="Poehlmann R."/>
            <person name="Luedi P."/>
            <person name="Choi S."/>
            <person name="Wing R.A."/>
            <person name="Flavier A."/>
            <person name="Gaffney T.D."/>
            <person name="Philippsen P."/>
        </authorList>
    </citation>
    <scope>NUCLEOTIDE SEQUENCE [LARGE SCALE GENOMIC DNA]</scope>
    <source>
        <strain>ATCC 10895 / CBS 109.51 / FGSC 9923 / NRRL Y-1056</strain>
    </source>
</reference>
<reference key="2">
    <citation type="journal article" date="2013" name="G3 (Bethesda)">
        <title>Genomes of Ashbya fungi isolated from insects reveal four mating-type loci, numerous translocations, lack of transposons, and distinct gene duplications.</title>
        <authorList>
            <person name="Dietrich F.S."/>
            <person name="Voegeli S."/>
            <person name="Kuo S."/>
            <person name="Philippsen P."/>
        </authorList>
    </citation>
    <scope>GENOME REANNOTATION</scope>
    <source>
        <strain>ATCC 10895 / CBS 109.51 / FGSC 9923 / NRRL Y-1056</strain>
    </source>
</reference>
<dbReference type="EMBL" id="AE016819">
    <property type="protein sequence ID" value="AAS53295.1"/>
    <property type="molecule type" value="Genomic_DNA"/>
</dbReference>
<dbReference type="RefSeq" id="NP_985471.1">
    <property type="nucleotide sequence ID" value="NM_210825.1"/>
</dbReference>
<dbReference type="SMR" id="Q755A2"/>
<dbReference type="STRING" id="284811.Q755A2"/>
<dbReference type="EnsemblFungi" id="AAS53295">
    <property type="protein sequence ID" value="AAS53295"/>
    <property type="gene ID" value="AGOS_AFL077C"/>
</dbReference>
<dbReference type="GeneID" id="4621700"/>
<dbReference type="KEGG" id="ago:AGOS_AFL077C"/>
<dbReference type="eggNOG" id="ENOG502S1H5">
    <property type="taxonomic scope" value="Eukaryota"/>
</dbReference>
<dbReference type="HOGENOM" id="CLU_099155_0_0_1"/>
<dbReference type="InParanoid" id="Q755A2"/>
<dbReference type="OMA" id="TPMFDTS"/>
<dbReference type="OrthoDB" id="4089816at2759"/>
<dbReference type="Proteomes" id="UP000000591">
    <property type="component" value="Chromosome VI"/>
</dbReference>
<dbReference type="GO" id="GO:0031083">
    <property type="term" value="C:BLOC-1 complex"/>
    <property type="evidence" value="ECO:0000318"/>
    <property type="project" value="GO_Central"/>
</dbReference>
<dbReference type="GO" id="GO:0005768">
    <property type="term" value="C:endosome"/>
    <property type="evidence" value="ECO:0007669"/>
    <property type="project" value="UniProtKB-SubCell"/>
</dbReference>
<dbReference type="GO" id="GO:0007032">
    <property type="term" value="P:endosome organization"/>
    <property type="evidence" value="ECO:0000318"/>
    <property type="project" value="GO_Central"/>
</dbReference>
<dbReference type="GO" id="GO:0032880">
    <property type="term" value="P:regulation of protein localization"/>
    <property type="evidence" value="ECO:0000318"/>
    <property type="project" value="GO_Central"/>
</dbReference>
<dbReference type="InterPro" id="IPR051390">
    <property type="entry name" value="BLOC-1_subunit_KXD1"/>
</dbReference>
<dbReference type="InterPro" id="IPR019371">
    <property type="entry name" value="KxDL_dom"/>
</dbReference>
<dbReference type="PANTHER" id="PTHR37787">
    <property type="entry name" value="BIOGENESIS OF LYSOSOME-RELATED ORGANELLES COMPLEX 1 SUBUNIT KXD1"/>
    <property type="match status" value="1"/>
</dbReference>
<dbReference type="PANTHER" id="PTHR37787:SF1">
    <property type="entry name" value="BIOGENESIS OF LYSOSOME-RELATED ORGANELLES COMPLEX 1 SUBUNIT KXD1"/>
    <property type="match status" value="1"/>
</dbReference>
<dbReference type="Pfam" id="PF10241">
    <property type="entry name" value="KxDL"/>
    <property type="match status" value="1"/>
</dbReference>
<proteinExistence type="inferred from homology"/>